<evidence type="ECO:0000255" key="1">
    <source>
        <dbReference type="HAMAP-Rule" id="MF_00532"/>
    </source>
</evidence>
<evidence type="ECO:0000305" key="2"/>
<comment type="similarity">
    <text evidence="1">Belongs to the universal ribosomal protein uS9 family.</text>
</comment>
<organism>
    <name type="scientific">Escherichia coli O8 (strain IAI1)</name>
    <dbReference type="NCBI Taxonomy" id="585034"/>
    <lineage>
        <taxon>Bacteria</taxon>
        <taxon>Pseudomonadati</taxon>
        <taxon>Pseudomonadota</taxon>
        <taxon>Gammaproteobacteria</taxon>
        <taxon>Enterobacterales</taxon>
        <taxon>Enterobacteriaceae</taxon>
        <taxon>Escherichia</taxon>
    </lineage>
</organism>
<reference key="1">
    <citation type="journal article" date="2009" name="PLoS Genet.">
        <title>Organised genome dynamics in the Escherichia coli species results in highly diverse adaptive paths.</title>
        <authorList>
            <person name="Touchon M."/>
            <person name="Hoede C."/>
            <person name="Tenaillon O."/>
            <person name="Barbe V."/>
            <person name="Baeriswyl S."/>
            <person name="Bidet P."/>
            <person name="Bingen E."/>
            <person name="Bonacorsi S."/>
            <person name="Bouchier C."/>
            <person name="Bouvet O."/>
            <person name="Calteau A."/>
            <person name="Chiapello H."/>
            <person name="Clermont O."/>
            <person name="Cruveiller S."/>
            <person name="Danchin A."/>
            <person name="Diard M."/>
            <person name="Dossat C."/>
            <person name="Karoui M.E."/>
            <person name="Frapy E."/>
            <person name="Garry L."/>
            <person name="Ghigo J.M."/>
            <person name="Gilles A.M."/>
            <person name="Johnson J."/>
            <person name="Le Bouguenec C."/>
            <person name="Lescat M."/>
            <person name="Mangenot S."/>
            <person name="Martinez-Jehanne V."/>
            <person name="Matic I."/>
            <person name="Nassif X."/>
            <person name="Oztas S."/>
            <person name="Petit M.A."/>
            <person name="Pichon C."/>
            <person name="Rouy Z."/>
            <person name="Ruf C.S."/>
            <person name="Schneider D."/>
            <person name="Tourret J."/>
            <person name="Vacherie B."/>
            <person name="Vallenet D."/>
            <person name="Medigue C."/>
            <person name="Rocha E.P.C."/>
            <person name="Denamur E."/>
        </authorList>
    </citation>
    <scope>NUCLEOTIDE SEQUENCE [LARGE SCALE GENOMIC DNA]</scope>
    <source>
        <strain>IAI1</strain>
    </source>
</reference>
<dbReference type="EMBL" id="CU928160">
    <property type="protein sequence ID" value="CAR00186.1"/>
    <property type="molecule type" value="Genomic_DNA"/>
</dbReference>
<dbReference type="RefSeq" id="WP_000829818.1">
    <property type="nucleotide sequence ID" value="NC_011741.1"/>
</dbReference>
<dbReference type="SMR" id="B7M0U2"/>
<dbReference type="GeneID" id="98390344"/>
<dbReference type="KEGG" id="ecr:ECIAI1_3372"/>
<dbReference type="HOGENOM" id="CLU_046483_2_1_6"/>
<dbReference type="GO" id="GO:0022627">
    <property type="term" value="C:cytosolic small ribosomal subunit"/>
    <property type="evidence" value="ECO:0007669"/>
    <property type="project" value="TreeGrafter"/>
</dbReference>
<dbReference type="GO" id="GO:0003723">
    <property type="term" value="F:RNA binding"/>
    <property type="evidence" value="ECO:0007669"/>
    <property type="project" value="TreeGrafter"/>
</dbReference>
<dbReference type="GO" id="GO:0003735">
    <property type="term" value="F:structural constituent of ribosome"/>
    <property type="evidence" value="ECO:0007669"/>
    <property type="project" value="InterPro"/>
</dbReference>
<dbReference type="GO" id="GO:0006412">
    <property type="term" value="P:translation"/>
    <property type="evidence" value="ECO:0007669"/>
    <property type="project" value="UniProtKB-UniRule"/>
</dbReference>
<dbReference type="FunFam" id="3.30.230.10:FF:000001">
    <property type="entry name" value="30S ribosomal protein S9"/>
    <property type="match status" value="1"/>
</dbReference>
<dbReference type="Gene3D" id="3.30.230.10">
    <property type="match status" value="1"/>
</dbReference>
<dbReference type="HAMAP" id="MF_00532_B">
    <property type="entry name" value="Ribosomal_uS9_B"/>
    <property type="match status" value="1"/>
</dbReference>
<dbReference type="InterPro" id="IPR020568">
    <property type="entry name" value="Ribosomal_Su5_D2-typ_SF"/>
</dbReference>
<dbReference type="InterPro" id="IPR000754">
    <property type="entry name" value="Ribosomal_uS9"/>
</dbReference>
<dbReference type="InterPro" id="IPR023035">
    <property type="entry name" value="Ribosomal_uS9_bac/plastid"/>
</dbReference>
<dbReference type="InterPro" id="IPR020574">
    <property type="entry name" value="Ribosomal_uS9_CS"/>
</dbReference>
<dbReference type="InterPro" id="IPR014721">
    <property type="entry name" value="Ribsml_uS5_D2-typ_fold_subgr"/>
</dbReference>
<dbReference type="NCBIfam" id="NF001099">
    <property type="entry name" value="PRK00132.1"/>
    <property type="match status" value="1"/>
</dbReference>
<dbReference type="PANTHER" id="PTHR21569">
    <property type="entry name" value="RIBOSOMAL PROTEIN S9"/>
    <property type="match status" value="1"/>
</dbReference>
<dbReference type="PANTHER" id="PTHR21569:SF1">
    <property type="entry name" value="SMALL RIBOSOMAL SUBUNIT PROTEIN US9M"/>
    <property type="match status" value="1"/>
</dbReference>
<dbReference type="Pfam" id="PF00380">
    <property type="entry name" value="Ribosomal_S9"/>
    <property type="match status" value="1"/>
</dbReference>
<dbReference type="SUPFAM" id="SSF54211">
    <property type="entry name" value="Ribosomal protein S5 domain 2-like"/>
    <property type="match status" value="1"/>
</dbReference>
<dbReference type="PROSITE" id="PS00360">
    <property type="entry name" value="RIBOSOMAL_S9"/>
    <property type="match status" value="1"/>
</dbReference>
<keyword id="KW-0687">Ribonucleoprotein</keyword>
<keyword id="KW-0689">Ribosomal protein</keyword>
<gene>
    <name evidence="1" type="primary">rpsI</name>
    <name type="ordered locus">ECIAI1_3372</name>
</gene>
<sequence length="130" mass="14856">MAENQYYGTGRRKSSAARVFIKPGNGKIVINQRSLEQYFGRETARMVVRQPLELVDMVEKLDLYITVKGGGISGQAGAIRHGITRALMEYDESLRSELRKAGFVTRDARQVERKKVGLRKARRRPQFSKR</sequence>
<accession>B7M0U2</accession>
<protein>
    <recommendedName>
        <fullName evidence="1">Small ribosomal subunit protein uS9</fullName>
    </recommendedName>
    <alternativeName>
        <fullName evidence="2">30S ribosomal protein S9</fullName>
    </alternativeName>
</protein>
<name>RS9_ECO8A</name>
<feature type="chain" id="PRO_1000128119" description="Small ribosomal subunit protein uS9">
    <location>
        <begin position="1"/>
        <end position="130"/>
    </location>
</feature>
<proteinExistence type="inferred from homology"/>